<protein>
    <recommendedName>
        <fullName evidence="1">Bifunctional purine biosynthesis protein PurH</fullName>
    </recommendedName>
    <domain>
        <recommendedName>
            <fullName evidence="1">Phosphoribosylaminoimidazolecarboxamide formyltransferase</fullName>
            <ecNumber evidence="1">2.1.2.3</ecNumber>
        </recommendedName>
        <alternativeName>
            <fullName evidence="1">AICAR transformylase</fullName>
        </alternativeName>
    </domain>
    <domain>
        <recommendedName>
            <fullName evidence="1">IMP cyclohydrolase</fullName>
            <ecNumber evidence="1">3.5.4.10</ecNumber>
        </recommendedName>
        <alternativeName>
            <fullName evidence="1">ATIC</fullName>
        </alternativeName>
        <alternativeName>
            <fullName evidence="1">IMP synthase</fullName>
        </alternativeName>
        <alternativeName>
            <fullName evidence="1">Inosinicase</fullName>
        </alternativeName>
    </domain>
</protein>
<evidence type="ECO:0000255" key="1">
    <source>
        <dbReference type="HAMAP-Rule" id="MF_00139"/>
    </source>
</evidence>
<evidence type="ECO:0000255" key="2">
    <source>
        <dbReference type="PROSITE-ProRule" id="PRU01202"/>
    </source>
</evidence>
<proteinExistence type="inferred from homology"/>
<dbReference type="EC" id="2.1.2.3" evidence="1"/>
<dbReference type="EC" id="3.5.4.10" evidence="1"/>
<dbReference type="EMBL" id="CP001488">
    <property type="protein sequence ID" value="ACO01539.1"/>
    <property type="molecule type" value="Genomic_DNA"/>
</dbReference>
<dbReference type="RefSeq" id="WP_004684287.1">
    <property type="nucleotide sequence ID" value="NC_012441.1"/>
</dbReference>
<dbReference type="SMR" id="C0RF67"/>
<dbReference type="GeneID" id="97533059"/>
<dbReference type="KEGG" id="bmi:BMEA_A1866"/>
<dbReference type="HOGENOM" id="CLU_016316_5_2_5"/>
<dbReference type="UniPathway" id="UPA00074">
    <property type="reaction ID" value="UER00133"/>
</dbReference>
<dbReference type="UniPathway" id="UPA00074">
    <property type="reaction ID" value="UER00135"/>
</dbReference>
<dbReference type="PRO" id="PR:C0RF67"/>
<dbReference type="Proteomes" id="UP000001748">
    <property type="component" value="Chromosome I"/>
</dbReference>
<dbReference type="GO" id="GO:0005829">
    <property type="term" value="C:cytosol"/>
    <property type="evidence" value="ECO:0007669"/>
    <property type="project" value="TreeGrafter"/>
</dbReference>
<dbReference type="GO" id="GO:0003937">
    <property type="term" value="F:IMP cyclohydrolase activity"/>
    <property type="evidence" value="ECO:0007669"/>
    <property type="project" value="UniProtKB-UniRule"/>
</dbReference>
<dbReference type="GO" id="GO:0004643">
    <property type="term" value="F:phosphoribosylaminoimidazolecarboxamide formyltransferase activity"/>
    <property type="evidence" value="ECO:0007669"/>
    <property type="project" value="UniProtKB-UniRule"/>
</dbReference>
<dbReference type="GO" id="GO:0006189">
    <property type="term" value="P:'de novo' IMP biosynthetic process"/>
    <property type="evidence" value="ECO:0007669"/>
    <property type="project" value="UniProtKB-UniRule"/>
</dbReference>
<dbReference type="CDD" id="cd01421">
    <property type="entry name" value="IMPCH"/>
    <property type="match status" value="1"/>
</dbReference>
<dbReference type="FunFam" id="3.40.140.20:FF:000001">
    <property type="entry name" value="Bifunctional purine biosynthesis protein PurH"/>
    <property type="match status" value="1"/>
</dbReference>
<dbReference type="FunFam" id="3.40.140.20:FF:000002">
    <property type="entry name" value="Bifunctional purine biosynthesis protein PurH"/>
    <property type="match status" value="1"/>
</dbReference>
<dbReference type="FunFam" id="3.40.50.1380:FF:000001">
    <property type="entry name" value="Bifunctional purine biosynthesis protein PurH"/>
    <property type="match status" value="1"/>
</dbReference>
<dbReference type="Gene3D" id="3.40.140.20">
    <property type="match status" value="2"/>
</dbReference>
<dbReference type="Gene3D" id="3.40.50.1380">
    <property type="entry name" value="Methylglyoxal synthase-like domain"/>
    <property type="match status" value="1"/>
</dbReference>
<dbReference type="HAMAP" id="MF_00139">
    <property type="entry name" value="PurH"/>
    <property type="match status" value="1"/>
</dbReference>
<dbReference type="InterPro" id="IPR024051">
    <property type="entry name" value="AICAR_Tfase_dup_dom_sf"/>
</dbReference>
<dbReference type="InterPro" id="IPR016193">
    <property type="entry name" value="Cytidine_deaminase-like"/>
</dbReference>
<dbReference type="InterPro" id="IPR011607">
    <property type="entry name" value="MGS-like_dom"/>
</dbReference>
<dbReference type="InterPro" id="IPR036914">
    <property type="entry name" value="MGS-like_dom_sf"/>
</dbReference>
<dbReference type="InterPro" id="IPR002695">
    <property type="entry name" value="PurH-like"/>
</dbReference>
<dbReference type="NCBIfam" id="NF002049">
    <property type="entry name" value="PRK00881.1"/>
    <property type="match status" value="1"/>
</dbReference>
<dbReference type="NCBIfam" id="TIGR00355">
    <property type="entry name" value="purH"/>
    <property type="match status" value="1"/>
</dbReference>
<dbReference type="PANTHER" id="PTHR11692:SF0">
    <property type="entry name" value="BIFUNCTIONAL PURINE BIOSYNTHESIS PROTEIN ATIC"/>
    <property type="match status" value="1"/>
</dbReference>
<dbReference type="PANTHER" id="PTHR11692">
    <property type="entry name" value="BIFUNCTIONAL PURINE BIOSYNTHESIS PROTEIN PURH"/>
    <property type="match status" value="1"/>
</dbReference>
<dbReference type="Pfam" id="PF01808">
    <property type="entry name" value="AICARFT_IMPCHas"/>
    <property type="match status" value="1"/>
</dbReference>
<dbReference type="Pfam" id="PF02142">
    <property type="entry name" value="MGS"/>
    <property type="match status" value="1"/>
</dbReference>
<dbReference type="PIRSF" id="PIRSF000414">
    <property type="entry name" value="AICARFT_IMPCHas"/>
    <property type="match status" value="1"/>
</dbReference>
<dbReference type="SMART" id="SM00798">
    <property type="entry name" value="AICARFT_IMPCHas"/>
    <property type="match status" value="1"/>
</dbReference>
<dbReference type="SMART" id="SM00851">
    <property type="entry name" value="MGS"/>
    <property type="match status" value="1"/>
</dbReference>
<dbReference type="SUPFAM" id="SSF53927">
    <property type="entry name" value="Cytidine deaminase-like"/>
    <property type="match status" value="1"/>
</dbReference>
<dbReference type="SUPFAM" id="SSF52335">
    <property type="entry name" value="Methylglyoxal synthase-like"/>
    <property type="match status" value="1"/>
</dbReference>
<dbReference type="PROSITE" id="PS51855">
    <property type="entry name" value="MGS"/>
    <property type="match status" value="1"/>
</dbReference>
<gene>
    <name evidence="1" type="primary">purH</name>
    <name type="ordered locus">BMEA_A1866</name>
</gene>
<keyword id="KW-0378">Hydrolase</keyword>
<keyword id="KW-0511">Multifunctional enzyme</keyword>
<keyword id="KW-0658">Purine biosynthesis</keyword>
<keyword id="KW-0808">Transferase</keyword>
<comment type="catalytic activity">
    <reaction evidence="1">
        <text>(6R)-10-formyltetrahydrofolate + 5-amino-1-(5-phospho-beta-D-ribosyl)imidazole-4-carboxamide = 5-formamido-1-(5-phospho-D-ribosyl)imidazole-4-carboxamide + (6S)-5,6,7,8-tetrahydrofolate</text>
        <dbReference type="Rhea" id="RHEA:22192"/>
        <dbReference type="ChEBI" id="CHEBI:57453"/>
        <dbReference type="ChEBI" id="CHEBI:58467"/>
        <dbReference type="ChEBI" id="CHEBI:58475"/>
        <dbReference type="ChEBI" id="CHEBI:195366"/>
        <dbReference type="EC" id="2.1.2.3"/>
    </reaction>
</comment>
<comment type="catalytic activity">
    <reaction evidence="1">
        <text>IMP + H2O = 5-formamido-1-(5-phospho-D-ribosyl)imidazole-4-carboxamide</text>
        <dbReference type="Rhea" id="RHEA:18445"/>
        <dbReference type="ChEBI" id="CHEBI:15377"/>
        <dbReference type="ChEBI" id="CHEBI:58053"/>
        <dbReference type="ChEBI" id="CHEBI:58467"/>
        <dbReference type="EC" id="3.5.4.10"/>
    </reaction>
</comment>
<comment type="pathway">
    <text evidence="1">Purine metabolism; IMP biosynthesis via de novo pathway; 5-formamido-1-(5-phospho-D-ribosyl)imidazole-4-carboxamide from 5-amino-1-(5-phospho-D-ribosyl)imidazole-4-carboxamide (10-formyl THF route): step 1/1.</text>
</comment>
<comment type="pathway">
    <text evidence="1">Purine metabolism; IMP biosynthesis via de novo pathway; IMP from 5-formamido-1-(5-phospho-D-ribosyl)imidazole-4-carboxamide: step 1/1.</text>
</comment>
<comment type="domain">
    <text evidence="1">The IMP cyclohydrolase activity resides in the N-terminal region.</text>
</comment>
<comment type="similarity">
    <text evidence="1">Belongs to the PurH family.</text>
</comment>
<accession>C0RF67</accession>
<reference key="1">
    <citation type="submission" date="2009-03" db="EMBL/GenBank/DDBJ databases">
        <title>Brucella melitensis ATCC 23457 whole genome shotgun sequencing project.</title>
        <authorList>
            <person name="Setubal J.C."/>
            <person name="Boyle S."/>
            <person name="Crasta O.R."/>
            <person name="Gillespie J.J."/>
            <person name="Kenyon R.W."/>
            <person name="Lu J."/>
            <person name="Mane S."/>
            <person name="Nagrani S."/>
            <person name="Shallom J.M."/>
            <person name="Shallom S."/>
            <person name="Shukla M."/>
            <person name="Snyder E.E."/>
            <person name="Sobral B.W."/>
            <person name="Wattam A.R."/>
            <person name="Will R."/>
            <person name="Williams K."/>
            <person name="Yoo H."/>
            <person name="Munk C."/>
            <person name="Tapia R."/>
            <person name="Han C."/>
            <person name="Detter J.C."/>
            <person name="Bruce D."/>
            <person name="Brettin T.S."/>
        </authorList>
    </citation>
    <scope>NUCLEOTIDE SEQUENCE [LARGE SCALE GENOMIC DNA]</scope>
    <source>
        <strain>ATCC 23457</strain>
    </source>
</reference>
<name>PUR9_BRUMB</name>
<feature type="chain" id="PRO_1000122949" description="Bifunctional purine biosynthesis protein PurH">
    <location>
        <begin position="1"/>
        <end position="538"/>
    </location>
</feature>
<feature type="domain" description="MGS-like" evidence="2">
    <location>
        <begin position="6"/>
        <end position="158"/>
    </location>
</feature>
<organism>
    <name type="scientific">Brucella melitensis biotype 2 (strain ATCC 23457)</name>
    <dbReference type="NCBI Taxonomy" id="546272"/>
    <lineage>
        <taxon>Bacteria</taxon>
        <taxon>Pseudomonadati</taxon>
        <taxon>Pseudomonadota</taxon>
        <taxon>Alphaproteobacteria</taxon>
        <taxon>Hyphomicrobiales</taxon>
        <taxon>Brucellaceae</taxon>
        <taxon>Brucella/Ochrobactrum group</taxon>
        <taxon>Brucella</taxon>
    </lineage>
</organism>
<sequence length="538" mass="56481">MAVSSKHIPAPDLHRVRRALLSVSDKTGLIDFAKALHANGVEILSTGGTAKSIAAAGIPVKDVSEITGFPEIMDGRVKTLHPAVHGGLLAVRNDPEHVAAMEEHGIGGIDLAVINLYPFEEVRFKGGDYDTTVENIDIGGPAMIRASAKNHAYVATVVDPADYADVVAELEKHSGSLPLAFRKKLAAKAFSRTAAYDAAISNWFAEAIDEETPTYRAVAGKLHSVMRYGENPHQTAGFYLTGEKRPGVATATQLQGKQLSYNNINDTDAAFELVAEFDPARTAAVAIIKHANPCGVAEASTIKEAYLKALACDPVSAFGGIVALNRTLDEEAAEEIVKTFTEVIIAPDATEGAQAIVAAKKNLRLLVTGGLPDPRAKGIAAKTVAGGLLVQSRDNGVVDDLDLKVVTKRAPTEAELNDLKFAFRVGKHVKSNAIVYVKDGATVGIGAGQMSRVDSARIAARKAEDAAEAAGLAAPLTKGCVVASDAFFPFADGLLSAVEAGATAVIQPGGSMRDDEVIAAADEHGIAMVMTGMRHFRH</sequence>